<feature type="signal peptide" evidence="5">
    <location>
        <begin position="1"/>
        <end position="21"/>
    </location>
</feature>
<feature type="propeptide" id="PRO_0000004379" description="Activation peptide" evidence="1">
    <location>
        <begin position="22"/>
        <end position="113"/>
    </location>
</feature>
<feature type="chain" id="PRO_0000004380" description="Carboxypeptidase B2">
    <location>
        <begin position="114"/>
        <end position="422"/>
    </location>
</feature>
<feature type="domain" description="Peptidase M14" evidence="6">
    <location>
        <begin position="121"/>
        <end position="418"/>
    </location>
</feature>
<feature type="active site" description="Proton donor/acceptor" evidence="6">
    <location>
        <position position="384"/>
    </location>
</feature>
<feature type="binding site" evidence="2">
    <location>
        <begin position="180"/>
        <end position="183"/>
    </location>
    <ligand>
        <name>substrate</name>
    </ligand>
</feature>
<feature type="binding site" evidence="6">
    <location>
        <position position="180"/>
    </location>
    <ligand>
        <name>Zn(2+)</name>
        <dbReference type="ChEBI" id="CHEBI:29105"/>
        <note>catalytic</note>
    </ligand>
</feature>
<feature type="binding site" evidence="6">
    <location>
        <position position="183"/>
    </location>
    <ligand>
        <name>Zn(2+)</name>
        <dbReference type="ChEBI" id="CHEBI:29105"/>
        <note>catalytic</note>
    </ligand>
</feature>
<feature type="binding site" evidence="2">
    <location>
        <position position="238"/>
    </location>
    <ligand>
        <name>substrate</name>
    </ligand>
</feature>
<feature type="binding site" evidence="2">
    <location>
        <begin position="255"/>
        <end position="256"/>
    </location>
    <ligand>
        <name>substrate</name>
    </ligand>
</feature>
<feature type="binding site" evidence="6">
    <location>
        <position position="309"/>
    </location>
    <ligand>
        <name>Zn(2+)</name>
        <dbReference type="ChEBI" id="CHEBI:29105"/>
        <note>catalytic</note>
    </ligand>
</feature>
<feature type="binding site" evidence="2">
    <location>
        <begin position="310"/>
        <end position="311"/>
    </location>
    <ligand>
        <name>substrate</name>
    </ligand>
</feature>
<feature type="binding site" evidence="2">
    <location>
        <position position="362"/>
    </location>
    <ligand>
        <name>substrate</name>
    </ligand>
</feature>
<feature type="site" description="Cleavage; by thrombin" evidence="1">
    <location>
        <begin position="323"/>
        <end position="324"/>
    </location>
</feature>
<feature type="glycosylation site" description="N-linked (GlcNAc...) asparagine" evidence="5">
    <location>
        <position position="43"/>
    </location>
</feature>
<feature type="glycosylation site" description="N-linked (GlcNAc...) asparagine" evidence="8">
    <location>
        <position position="72"/>
    </location>
</feature>
<feature type="glycosylation site" description="N-linked (GlcNAc...) asparagine" evidence="5">
    <location>
        <position position="84"/>
    </location>
</feature>
<feature type="glycosylation site" description="N-linked (GlcNAc...) asparagine" evidence="5">
    <location>
        <position position="107"/>
    </location>
</feature>
<feature type="glycosylation site" description="N-linked (GlcNAc...) asparagine" evidence="5">
    <location>
        <position position="240"/>
    </location>
</feature>
<feature type="glycosylation site" description="N-linked (GlcNAc...) asparagine" evidence="5">
    <location>
        <position position="322"/>
    </location>
</feature>
<feature type="disulfide bond" evidence="4">
    <location>
        <begin position="177"/>
        <end position="190"/>
    </location>
</feature>
<feature type="disulfide bond" evidence="4">
    <location>
        <begin position="249"/>
        <end position="273"/>
    </location>
</feature>
<feature type="disulfide bond" evidence="4">
    <location>
        <begin position="264"/>
        <end position="278"/>
    </location>
</feature>
<feature type="sequence conflict" description="In Ref. 3; AAF00528." evidence="9" ref="3">
    <original>I</original>
    <variation>L</variation>
    <location>
        <position position="135"/>
    </location>
</feature>
<feature type="sequence conflict" description="In Ref. 5; AAH89577." evidence="9" ref="5">
    <original>Y</original>
    <variation>C</variation>
    <location>
        <position position="277"/>
    </location>
</feature>
<feature type="sequence conflict" description="In Ref. 3; AAF00528." evidence="9" ref="3">
    <original>ESI</original>
    <variation>GSF</variation>
    <location>
        <begin position="344"/>
        <end position="346"/>
    </location>
</feature>
<gene>
    <name type="primary">Cpb2</name>
    <name type="synonym">Tafi</name>
</gene>
<protein>
    <recommendedName>
        <fullName>Carboxypeptidase B2</fullName>
        <ecNumber>3.4.17.20</ecNumber>
    </recommendedName>
    <alternativeName>
        <fullName>Carboxypeptidase R</fullName>
        <shortName>CPR</shortName>
    </alternativeName>
    <alternativeName>
        <fullName>Carboxypeptidase U</fullName>
        <shortName>CPU</shortName>
    </alternativeName>
    <alternativeName>
        <fullName>Thrombin-activable fibrinolysis inhibitor</fullName>
        <shortName>TAFI</shortName>
    </alternativeName>
</protein>
<accession>Q9JHH6</accession>
<accession>Q5EBI3</accession>
<accession>Q9QZF0</accession>
<proteinExistence type="evidence at protein level"/>
<keyword id="KW-0094">Blood coagulation</keyword>
<keyword id="KW-0121">Carboxypeptidase</keyword>
<keyword id="KW-1015">Disulfide bond</keyword>
<keyword id="KW-0280">Fibrinolysis</keyword>
<keyword id="KW-0325">Glycoprotein</keyword>
<keyword id="KW-0356">Hemostasis</keyword>
<keyword id="KW-0378">Hydrolase</keyword>
<keyword id="KW-0479">Metal-binding</keyword>
<keyword id="KW-0482">Metalloprotease</keyword>
<keyword id="KW-0645">Protease</keyword>
<keyword id="KW-1185">Reference proteome</keyword>
<keyword id="KW-0964">Secreted</keyword>
<keyword id="KW-0732">Signal</keyword>
<keyword id="KW-0862">Zinc</keyword>
<keyword id="KW-0865">Zymogen</keyword>
<reference key="1">
    <citation type="journal article" date="2000" name="J. Immunol.">
        <title>Pro-carboxypeptidase R is an acute phase protein in the mouse, whereas carboxypeptidase N is not.</title>
        <authorList>
            <person name="Sato T."/>
            <person name="Miwa T."/>
            <person name="Akatsu H."/>
            <person name="Matsukawa N."/>
            <person name="Obata K."/>
            <person name="Okada N."/>
            <person name="Campbell W."/>
            <person name="Okada H."/>
        </authorList>
    </citation>
    <scope>NUCLEOTIDE SEQUENCE [MRNA]</scope>
</reference>
<reference key="2">
    <citation type="journal article" date="2000" name="Thromb. Haemost.">
        <title>Characterization of mouse thrombin-activatable fibrinolysis inhibitor.</title>
        <authorList>
            <person name="Marx P.F."/>
            <person name="Wagenaar G.T.M."/>
            <person name="Reijerkerk A."/>
            <person name="Tiekstra M.J."/>
            <person name="van Rossum A.G.S.H."/>
            <person name="Gebbink M.F.G.B."/>
            <person name="Meijers J.C.M."/>
        </authorList>
    </citation>
    <scope>NUCLEOTIDE SEQUENCE [MRNA]</scope>
    <scope>SUBCELLULAR LOCATION</scope>
    <scope>TISSUE SPECIFICITY</scope>
</reference>
<reference key="3">
    <citation type="submission" date="1999-09" db="EMBL/GenBank/DDBJ databases">
        <title>Isolation and characterization of mouse liver carboxypeptidase B gene.</title>
        <authorList>
            <person name="He Y.C."/>
            <person name="Broze G."/>
        </authorList>
    </citation>
    <scope>NUCLEOTIDE SEQUENCE [MRNA]</scope>
    <source>
        <strain>C57BL/6 X CBA</strain>
    </source>
</reference>
<reference key="4">
    <citation type="journal article" date="2005" name="Science">
        <title>The transcriptional landscape of the mammalian genome.</title>
        <authorList>
            <person name="Carninci P."/>
            <person name="Kasukawa T."/>
            <person name="Katayama S."/>
            <person name="Gough J."/>
            <person name="Frith M.C."/>
            <person name="Maeda N."/>
            <person name="Oyama R."/>
            <person name="Ravasi T."/>
            <person name="Lenhard B."/>
            <person name="Wells C."/>
            <person name="Kodzius R."/>
            <person name="Shimokawa K."/>
            <person name="Bajic V.B."/>
            <person name="Brenner S.E."/>
            <person name="Batalov S."/>
            <person name="Forrest A.R."/>
            <person name="Zavolan M."/>
            <person name="Davis M.J."/>
            <person name="Wilming L.G."/>
            <person name="Aidinis V."/>
            <person name="Allen J.E."/>
            <person name="Ambesi-Impiombato A."/>
            <person name="Apweiler R."/>
            <person name="Aturaliya R.N."/>
            <person name="Bailey T.L."/>
            <person name="Bansal M."/>
            <person name="Baxter L."/>
            <person name="Beisel K.W."/>
            <person name="Bersano T."/>
            <person name="Bono H."/>
            <person name="Chalk A.M."/>
            <person name="Chiu K.P."/>
            <person name="Choudhary V."/>
            <person name="Christoffels A."/>
            <person name="Clutterbuck D.R."/>
            <person name="Crowe M.L."/>
            <person name="Dalla E."/>
            <person name="Dalrymple B.P."/>
            <person name="de Bono B."/>
            <person name="Della Gatta G."/>
            <person name="di Bernardo D."/>
            <person name="Down T."/>
            <person name="Engstrom P."/>
            <person name="Fagiolini M."/>
            <person name="Faulkner G."/>
            <person name="Fletcher C.F."/>
            <person name="Fukushima T."/>
            <person name="Furuno M."/>
            <person name="Futaki S."/>
            <person name="Gariboldi M."/>
            <person name="Georgii-Hemming P."/>
            <person name="Gingeras T.R."/>
            <person name="Gojobori T."/>
            <person name="Green R.E."/>
            <person name="Gustincich S."/>
            <person name="Harbers M."/>
            <person name="Hayashi Y."/>
            <person name="Hensch T.K."/>
            <person name="Hirokawa N."/>
            <person name="Hill D."/>
            <person name="Huminiecki L."/>
            <person name="Iacono M."/>
            <person name="Ikeo K."/>
            <person name="Iwama A."/>
            <person name="Ishikawa T."/>
            <person name="Jakt M."/>
            <person name="Kanapin A."/>
            <person name="Katoh M."/>
            <person name="Kawasawa Y."/>
            <person name="Kelso J."/>
            <person name="Kitamura H."/>
            <person name="Kitano H."/>
            <person name="Kollias G."/>
            <person name="Krishnan S.P."/>
            <person name="Kruger A."/>
            <person name="Kummerfeld S.K."/>
            <person name="Kurochkin I.V."/>
            <person name="Lareau L.F."/>
            <person name="Lazarevic D."/>
            <person name="Lipovich L."/>
            <person name="Liu J."/>
            <person name="Liuni S."/>
            <person name="McWilliam S."/>
            <person name="Madan Babu M."/>
            <person name="Madera M."/>
            <person name="Marchionni L."/>
            <person name="Matsuda H."/>
            <person name="Matsuzawa S."/>
            <person name="Miki H."/>
            <person name="Mignone F."/>
            <person name="Miyake S."/>
            <person name="Morris K."/>
            <person name="Mottagui-Tabar S."/>
            <person name="Mulder N."/>
            <person name="Nakano N."/>
            <person name="Nakauchi H."/>
            <person name="Ng P."/>
            <person name="Nilsson R."/>
            <person name="Nishiguchi S."/>
            <person name="Nishikawa S."/>
            <person name="Nori F."/>
            <person name="Ohara O."/>
            <person name="Okazaki Y."/>
            <person name="Orlando V."/>
            <person name="Pang K.C."/>
            <person name="Pavan W.J."/>
            <person name="Pavesi G."/>
            <person name="Pesole G."/>
            <person name="Petrovsky N."/>
            <person name="Piazza S."/>
            <person name="Reed J."/>
            <person name="Reid J.F."/>
            <person name="Ring B.Z."/>
            <person name="Ringwald M."/>
            <person name="Rost B."/>
            <person name="Ruan Y."/>
            <person name="Salzberg S.L."/>
            <person name="Sandelin A."/>
            <person name="Schneider C."/>
            <person name="Schoenbach C."/>
            <person name="Sekiguchi K."/>
            <person name="Semple C.A."/>
            <person name="Seno S."/>
            <person name="Sessa L."/>
            <person name="Sheng Y."/>
            <person name="Shibata Y."/>
            <person name="Shimada H."/>
            <person name="Shimada K."/>
            <person name="Silva D."/>
            <person name="Sinclair B."/>
            <person name="Sperling S."/>
            <person name="Stupka E."/>
            <person name="Sugiura K."/>
            <person name="Sultana R."/>
            <person name="Takenaka Y."/>
            <person name="Taki K."/>
            <person name="Tammoja K."/>
            <person name="Tan S.L."/>
            <person name="Tang S."/>
            <person name="Taylor M.S."/>
            <person name="Tegner J."/>
            <person name="Teichmann S.A."/>
            <person name="Ueda H.R."/>
            <person name="van Nimwegen E."/>
            <person name="Verardo R."/>
            <person name="Wei C.L."/>
            <person name="Yagi K."/>
            <person name="Yamanishi H."/>
            <person name="Zabarovsky E."/>
            <person name="Zhu S."/>
            <person name="Zimmer A."/>
            <person name="Hide W."/>
            <person name="Bult C."/>
            <person name="Grimmond S.M."/>
            <person name="Teasdale R.D."/>
            <person name="Liu E.T."/>
            <person name="Brusic V."/>
            <person name="Quackenbush J."/>
            <person name="Wahlestedt C."/>
            <person name="Mattick J.S."/>
            <person name="Hume D.A."/>
            <person name="Kai C."/>
            <person name="Sasaki D."/>
            <person name="Tomaru Y."/>
            <person name="Fukuda S."/>
            <person name="Kanamori-Katayama M."/>
            <person name="Suzuki M."/>
            <person name="Aoki J."/>
            <person name="Arakawa T."/>
            <person name="Iida J."/>
            <person name="Imamura K."/>
            <person name="Itoh M."/>
            <person name="Kato T."/>
            <person name="Kawaji H."/>
            <person name="Kawagashira N."/>
            <person name="Kawashima T."/>
            <person name="Kojima M."/>
            <person name="Kondo S."/>
            <person name="Konno H."/>
            <person name="Nakano K."/>
            <person name="Ninomiya N."/>
            <person name="Nishio T."/>
            <person name="Okada M."/>
            <person name="Plessy C."/>
            <person name="Shibata K."/>
            <person name="Shiraki T."/>
            <person name="Suzuki S."/>
            <person name="Tagami M."/>
            <person name="Waki K."/>
            <person name="Watahiki A."/>
            <person name="Okamura-Oho Y."/>
            <person name="Suzuki H."/>
            <person name="Kawai J."/>
            <person name="Hayashizaki Y."/>
        </authorList>
    </citation>
    <scope>NUCLEOTIDE SEQUENCE [LARGE SCALE MRNA]</scope>
    <source>
        <strain>C57BL/6J</strain>
    </source>
</reference>
<reference key="5">
    <citation type="journal article" date="2004" name="Genome Res.">
        <title>The status, quality, and expansion of the NIH full-length cDNA project: the Mammalian Gene Collection (MGC).</title>
        <authorList>
            <consortium name="The MGC Project Team"/>
        </authorList>
    </citation>
    <scope>NUCLEOTIDE SEQUENCE [LARGE SCALE MRNA]</scope>
    <source>
        <tissue>Liver</tissue>
    </source>
</reference>
<reference key="6">
    <citation type="journal article" date="2006" name="J. Proteome Res.">
        <title>Proteome-wide characterization of N-glycosylation events by diagonal chromatography.</title>
        <authorList>
            <person name="Ghesquiere B."/>
            <person name="Van Damme J."/>
            <person name="Martens L."/>
            <person name="Vandekerckhove J."/>
            <person name="Gevaert K."/>
        </authorList>
    </citation>
    <scope>GLYCOSYLATION [LARGE SCALE ANALYSIS] AT ASN-72</scope>
    <source>
        <strain>C57BL/6J</strain>
        <tissue>Plasma</tissue>
    </source>
</reference>
<reference key="7">
    <citation type="journal article" date="2010" name="Cell">
        <title>A tissue-specific atlas of mouse protein phosphorylation and expression.</title>
        <authorList>
            <person name="Huttlin E.L."/>
            <person name="Jedrychowski M.P."/>
            <person name="Elias J.E."/>
            <person name="Goswami T."/>
            <person name="Rad R."/>
            <person name="Beausoleil S.A."/>
            <person name="Villen J."/>
            <person name="Haas W."/>
            <person name="Sowa M.E."/>
            <person name="Gygi S.P."/>
        </authorList>
    </citation>
    <scope>IDENTIFICATION BY MASS SPECTROMETRY [LARGE SCALE ANALYSIS]</scope>
    <source>
        <tissue>Testis</tissue>
    </source>
</reference>
<organism>
    <name type="scientific">Mus musculus</name>
    <name type="common">Mouse</name>
    <dbReference type="NCBI Taxonomy" id="10090"/>
    <lineage>
        <taxon>Eukaryota</taxon>
        <taxon>Metazoa</taxon>
        <taxon>Chordata</taxon>
        <taxon>Craniata</taxon>
        <taxon>Vertebrata</taxon>
        <taxon>Euteleostomi</taxon>
        <taxon>Mammalia</taxon>
        <taxon>Eutheria</taxon>
        <taxon>Euarchontoglires</taxon>
        <taxon>Glires</taxon>
        <taxon>Rodentia</taxon>
        <taxon>Myomorpha</taxon>
        <taxon>Muroidea</taxon>
        <taxon>Muridae</taxon>
        <taxon>Murinae</taxon>
        <taxon>Mus</taxon>
        <taxon>Mus</taxon>
    </lineage>
</organism>
<comment type="function">
    <text>Cleaves C-terminal arginine or lysine residues from biologically active peptides such as kinins or anaphylatoxins in the circulation thereby regulating their activities. Down-regulates fibrinolysis by removing C-terminal lysine residues from fibrin that has already been partially degraded by plasmin.</text>
</comment>
<comment type="catalytic activity">
    <reaction>
        <text>Release of C-terminal Arg and Lys from a polypeptide.</text>
        <dbReference type="EC" id="3.4.17.20"/>
    </reaction>
</comment>
<comment type="cofactor">
    <cofactor evidence="3">
        <name>Zn(2+)</name>
        <dbReference type="ChEBI" id="CHEBI:29105"/>
    </cofactor>
    <text evidence="3">Binds 1 zinc ion per subunit.</text>
</comment>
<comment type="activity regulation">
    <text evidence="1">TAFI/CPB2 is unique among carboxypeptidases in that it spontaneously inactivates with a short half-life, a property that is crucial for its role in controlling blood clot lysis. The zymogen is stabilized by interactions with the activation peptide. Release of the activation peptide increases a dynamic flap mobility and in time this leads to conformational changes that disrupt the catalytic site and expose a cryptic thrombin-cleavage site present at Arg-323 (By similarity).</text>
</comment>
<comment type="subcellular location">
    <subcellularLocation>
        <location evidence="7">Secreted</location>
    </subcellularLocation>
</comment>
<comment type="tissue specificity">
    <text evidence="7">Plasma; synthesized in the liver.</text>
</comment>
<comment type="similarity">
    <text evidence="9">Belongs to the peptidase M14 family.</text>
</comment>
<name>CBPB2_MOUSE</name>
<evidence type="ECO:0000250" key="1"/>
<evidence type="ECO:0000250" key="2">
    <source>
        <dbReference type="UniProtKB" id="P00730"/>
    </source>
</evidence>
<evidence type="ECO:0000250" key="3">
    <source>
        <dbReference type="UniProtKB" id="P15086"/>
    </source>
</evidence>
<evidence type="ECO:0000250" key="4">
    <source>
        <dbReference type="UniProtKB" id="Q96IY4"/>
    </source>
</evidence>
<evidence type="ECO:0000255" key="5"/>
<evidence type="ECO:0000255" key="6">
    <source>
        <dbReference type="PROSITE-ProRule" id="PRU01379"/>
    </source>
</evidence>
<evidence type="ECO:0000269" key="7">
    <source>
    </source>
</evidence>
<evidence type="ECO:0000269" key="8">
    <source>
    </source>
</evidence>
<evidence type="ECO:0000305" key="9"/>
<dbReference type="EC" id="3.4.17.20"/>
<dbReference type="EMBL" id="AB021968">
    <property type="protein sequence ID" value="BAB03402.1"/>
    <property type="molecule type" value="mRNA"/>
</dbReference>
<dbReference type="EMBL" id="AF164524">
    <property type="protein sequence ID" value="AAF62385.1"/>
    <property type="molecule type" value="mRNA"/>
</dbReference>
<dbReference type="EMBL" id="AF186188">
    <property type="protein sequence ID" value="AAF00528.1"/>
    <property type="molecule type" value="mRNA"/>
</dbReference>
<dbReference type="EMBL" id="AK004045">
    <property type="protein sequence ID" value="BAB23141.1"/>
    <property type="molecule type" value="mRNA"/>
</dbReference>
<dbReference type="EMBL" id="BC089577">
    <property type="protein sequence ID" value="AAH89577.1"/>
    <property type="molecule type" value="mRNA"/>
</dbReference>
<dbReference type="CCDS" id="CCDS27277.1"/>
<dbReference type="RefSeq" id="NP_062749.2">
    <property type="nucleotide sequence ID" value="NM_019775.3"/>
</dbReference>
<dbReference type="SMR" id="Q9JHH6"/>
<dbReference type="BioGRID" id="207935">
    <property type="interactions" value="12"/>
</dbReference>
<dbReference type="FunCoup" id="Q9JHH6">
    <property type="interactions" value="162"/>
</dbReference>
<dbReference type="STRING" id="10090.ENSMUSP00000022576"/>
<dbReference type="MEROPS" id="M14.009"/>
<dbReference type="GlyCosmos" id="Q9JHH6">
    <property type="glycosylation" value="6 sites, No reported glycans"/>
</dbReference>
<dbReference type="GlyGen" id="Q9JHH6">
    <property type="glycosylation" value="7 sites"/>
</dbReference>
<dbReference type="iPTMnet" id="Q9JHH6"/>
<dbReference type="PhosphoSitePlus" id="Q9JHH6"/>
<dbReference type="CPTAC" id="non-CPTAC-5582"/>
<dbReference type="CPTAC" id="non-CPTAC-5583"/>
<dbReference type="PaxDb" id="10090-ENSMUSP00000022576"/>
<dbReference type="PeptideAtlas" id="Q9JHH6"/>
<dbReference type="ProteomicsDB" id="265561"/>
<dbReference type="Antibodypedia" id="1324">
    <property type="antibodies" value="622 antibodies from 35 providers"/>
</dbReference>
<dbReference type="DNASU" id="56373"/>
<dbReference type="Ensembl" id="ENSMUST00000022576.10">
    <property type="protein sequence ID" value="ENSMUSP00000022576.9"/>
    <property type="gene ID" value="ENSMUSG00000021999.10"/>
</dbReference>
<dbReference type="GeneID" id="56373"/>
<dbReference type="KEGG" id="mmu:56373"/>
<dbReference type="UCSC" id="uc007uqq.2">
    <property type="organism name" value="mouse"/>
</dbReference>
<dbReference type="AGR" id="MGI:1891837"/>
<dbReference type="CTD" id="1361"/>
<dbReference type="MGI" id="MGI:1891837">
    <property type="gene designation" value="Cpb2"/>
</dbReference>
<dbReference type="VEuPathDB" id="HostDB:ENSMUSG00000021999"/>
<dbReference type="eggNOG" id="KOG2650">
    <property type="taxonomic scope" value="Eukaryota"/>
</dbReference>
<dbReference type="GeneTree" id="ENSGT00940000159160"/>
<dbReference type="HOGENOM" id="CLU_019326_0_0_1"/>
<dbReference type="InParanoid" id="Q9JHH6"/>
<dbReference type="OMA" id="IGHITEY"/>
<dbReference type="OrthoDB" id="3626597at2759"/>
<dbReference type="PhylomeDB" id="Q9JHH6"/>
<dbReference type="TreeFam" id="TF317197"/>
<dbReference type="BRENDA" id="3.4.17.20">
    <property type="organism ID" value="3474"/>
</dbReference>
<dbReference type="Reactome" id="R-MMU-2022377">
    <property type="pathway name" value="Metabolism of Angiotensinogen to Angiotensins"/>
</dbReference>
<dbReference type="Reactome" id="R-MMU-977606">
    <property type="pathway name" value="Regulation of Complement cascade"/>
</dbReference>
<dbReference type="BioGRID-ORCS" id="56373">
    <property type="hits" value="1 hit in 76 CRISPR screens"/>
</dbReference>
<dbReference type="ChiTaRS" id="Capzb">
    <property type="organism name" value="mouse"/>
</dbReference>
<dbReference type="PRO" id="PR:Q9JHH6"/>
<dbReference type="Proteomes" id="UP000000589">
    <property type="component" value="Chromosome 14"/>
</dbReference>
<dbReference type="RNAct" id="Q9JHH6">
    <property type="molecule type" value="protein"/>
</dbReference>
<dbReference type="Bgee" id="ENSMUSG00000021999">
    <property type="expression patterns" value="Expressed in left lobe of liver and 75 other cell types or tissues"/>
</dbReference>
<dbReference type="GO" id="GO:0005576">
    <property type="term" value="C:extracellular region"/>
    <property type="evidence" value="ECO:0007669"/>
    <property type="project" value="UniProtKB-SubCell"/>
</dbReference>
<dbReference type="GO" id="GO:0004180">
    <property type="term" value="F:carboxypeptidase activity"/>
    <property type="evidence" value="ECO:0000314"/>
    <property type="project" value="MGI"/>
</dbReference>
<dbReference type="GO" id="GO:0004181">
    <property type="term" value="F:metallocarboxypeptidase activity"/>
    <property type="evidence" value="ECO:0007669"/>
    <property type="project" value="InterPro"/>
</dbReference>
<dbReference type="GO" id="GO:0008270">
    <property type="term" value="F:zinc ion binding"/>
    <property type="evidence" value="ECO:0007669"/>
    <property type="project" value="InterPro"/>
</dbReference>
<dbReference type="GO" id="GO:0007596">
    <property type="term" value="P:blood coagulation"/>
    <property type="evidence" value="ECO:0007669"/>
    <property type="project" value="UniProtKB-KW"/>
</dbReference>
<dbReference type="GO" id="GO:0042730">
    <property type="term" value="P:fibrinolysis"/>
    <property type="evidence" value="ECO:0007669"/>
    <property type="project" value="UniProtKB-KW"/>
</dbReference>
<dbReference type="GO" id="GO:0006508">
    <property type="term" value="P:proteolysis"/>
    <property type="evidence" value="ECO:0007669"/>
    <property type="project" value="UniProtKB-KW"/>
</dbReference>
<dbReference type="CDD" id="cd06246">
    <property type="entry name" value="M14_CPB2"/>
    <property type="match status" value="1"/>
</dbReference>
<dbReference type="FunFam" id="3.30.70.340:FF:000003">
    <property type="entry name" value="Carboxypeptidase B2"/>
    <property type="match status" value="1"/>
</dbReference>
<dbReference type="FunFam" id="3.40.630.10:FF:000084">
    <property type="entry name" value="Carboxypeptidase B2"/>
    <property type="match status" value="1"/>
</dbReference>
<dbReference type="Gene3D" id="3.30.70.340">
    <property type="entry name" value="Metallocarboxypeptidase-like"/>
    <property type="match status" value="1"/>
</dbReference>
<dbReference type="Gene3D" id="3.40.630.10">
    <property type="entry name" value="Zn peptidases"/>
    <property type="match status" value="1"/>
</dbReference>
<dbReference type="InterPro" id="IPR033849">
    <property type="entry name" value="CPB2"/>
</dbReference>
<dbReference type="InterPro" id="IPR036990">
    <property type="entry name" value="M14A-like_propep"/>
</dbReference>
<dbReference type="InterPro" id="IPR003146">
    <property type="entry name" value="M14A_act_pep"/>
</dbReference>
<dbReference type="InterPro" id="IPR000834">
    <property type="entry name" value="Peptidase_M14"/>
</dbReference>
<dbReference type="PANTHER" id="PTHR11705:SF17">
    <property type="entry name" value="CARBOXYPEPTIDASE B2"/>
    <property type="match status" value="1"/>
</dbReference>
<dbReference type="PANTHER" id="PTHR11705">
    <property type="entry name" value="PROTEASE FAMILY M14 CARBOXYPEPTIDASE A,B"/>
    <property type="match status" value="1"/>
</dbReference>
<dbReference type="Pfam" id="PF00246">
    <property type="entry name" value="Peptidase_M14"/>
    <property type="match status" value="1"/>
</dbReference>
<dbReference type="Pfam" id="PF02244">
    <property type="entry name" value="Propep_M14"/>
    <property type="match status" value="1"/>
</dbReference>
<dbReference type="PRINTS" id="PR00765">
    <property type="entry name" value="CRBOXYPTASEA"/>
</dbReference>
<dbReference type="SMART" id="SM00631">
    <property type="entry name" value="Zn_pept"/>
    <property type="match status" value="1"/>
</dbReference>
<dbReference type="SUPFAM" id="SSF54897">
    <property type="entry name" value="Protease propeptides/inhibitors"/>
    <property type="match status" value="1"/>
</dbReference>
<dbReference type="SUPFAM" id="SSF53187">
    <property type="entry name" value="Zn-dependent exopeptidases"/>
    <property type="match status" value="1"/>
</dbReference>
<dbReference type="PROSITE" id="PS52035">
    <property type="entry name" value="PEPTIDASE_M14"/>
    <property type="match status" value="1"/>
</dbReference>
<sequence length="422" mass="48871">MKLHGLGILVAIILYEQHGFAFQSGQVLSALPRTSRQVQLLQNLTTTYEVVLWQPVTAEFIEKKKEVHFFVNASDVDSVKAHLNVSRIPFNVLMNNVEDLIEQQTFNDTVSPRASASYYEQYHSLNEIYSWIEVITEQHPDMLQKIYIGSSFEKYPLYVLKVSGKEQRIKNAIWIDCGIHAREWISPAFCLWFIGYVTQFHGKENLYTRLLRHVDFYIMPVMNVDGYDYTWKKNRMWRKNRSAHKNNRCVGTDLNRNFASKHWCEKGASSSSCSETYCGLYPESEPEVKAVADFLRRNIDHIKAYISMHSYSQQILFPYSYNRSKSKDHEELSLVASEAVRAIESINKNTRYTHGSGSESLYLAPGGSDDWIYDLGIKYSFTIELRDTGRYGFLLPERYIKPTCAEALAAISKIVWHVIRNT</sequence>